<keyword id="KW-1003">Cell membrane</keyword>
<keyword id="KW-0472">Membrane</keyword>
<keyword id="KW-1185">Reference proteome</keyword>
<keyword id="KW-0812">Transmembrane</keyword>
<keyword id="KW-1133">Transmembrane helix</keyword>
<feature type="chain" id="PRO_0000426848" description="Uncharacterized protein MT1362">
    <location>
        <begin position="1"/>
        <end position="567"/>
    </location>
</feature>
<feature type="transmembrane region" description="Helical" evidence="1">
    <location>
        <begin position="57"/>
        <end position="77"/>
    </location>
</feature>
<feature type="transmembrane region" description="Helical" evidence="1">
    <location>
        <begin position="90"/>
        <end position="110"/>
    </location>
</feature>
<feature type="transmembrane region" description="Helical" evidence="1">
    <location>
        <begin position="142"/>
        <end position="162"/>
    </location>
</feature>
<feature type="transmembrane region" description="Helical" evidence="1">
    <location>
        <begin position="173"/>
        <end position="193"/>
    </location>
</feature>
<feature type="transmembrane region" description="Helical" evidence="1">
    <location>
        <begin position="221"/>
        <end position="241"/>
    </location>
</feature>
<feature type="transmembrane region" description="Helical" evidence="1">
    <location>
        <begin position="257"/>
        <end position="277"/>
    </location>
</feature>
<feature type="domain" description="HAMP" evidence="3">
    <location>
        <begin position="278"/>
        <end position="329"/>
    </location>
</feature>
<feature type="domain" description="Guanylate cyclase" evidence="2">
    <location>
        <begin position="361"/>
        <end position="485"/>
    </location>
</feature>
<feature type="region of interest" description="Disordered" evidence="4">
    <location>
        <begin position="1"/>
        <end position="26"/>
    </location>
</feature>
<sequence>MPSEKATTRHLPGAVETLSPRTGRRPETPAYGSWLLGRVSESPRMRRVRIQGMLTVAILVTNVIGLIVGAMLLTVAFPKPSVILDAPHWVSFGIVPGYCVLAFILGTYWLTRQTARALRWAIEERTPSHDEARSAFLVPLRVALAVLFLWGAAAALWTIIYGLANRLFIPRFLFSMGVIGVVAATSCYLLTEFALRPMAAQALEVGATPRSLVRGIVGRTMLVWLLCSGVPNVGVALTAIFDDTFWELSNDQFMITVLILWAPLLIFGFILMWILAWLTATPVRVVREALNRVEQGDLSGDLVVFDGTELGELQRGFNRMVEGLRERERVRDLFGRHVGREVAAAAERERPKLGGEERHVAVVFVDIVGSTQLVTSRPAAEVVMLLNRFFTVIVDEVNHHRGLVNKFQGDASLAVFGAPNRLSHPEDAALATARAIADRLASEMPECQAGIGVAAGQVVAGNVGAHERFEYTVIGEPVNEAARLCELAKSYPSRLLASSQTLRGASENECARWSLGETVTLRGHDQPIRLASPVQQLQMPAQSADIVGGALGDHQTHTIYRGAHPTD</sequence>
<comment type="subcellular location">
    <subcellularLocation>
        <location evidence="5">Cell membrane</location>
        <topology evidence="5">Multi-pass membrane protein</topology>
    </subcellularLocation>
</comment>
<comment type="similarity">
    <text evidence="5">Belongs to the adenylyl cyclase class-3 family.</text>
</comment>
<gene>
    <name type="ordered locus">MT1362</name>
</gene>
<protein>
    <recommendedName>
        <fullName>Uncharacterized protein MT1362</fullName>
    </recommendedName>
</protein>
<reference key="1">
    <citation type="journal article" date="2002" name="J. Bacteriol.">
        <title>Whole-genome comparison of Mycobacterium tuberculosis clinical and laboratory strains.</title>
        <authorList>
            <person name="Fleischmann R.D."/>
            <person name="Alland D."/>
            <person name="Eisen J.A."/>
            <person name="Carpenter L."/>
            <person name="White O."/>
            <person name="Peterson J.D."/>
            <person name="DeBoy R.T."/>
            <person name="Dodson R.J."/>
            <person name="Gwinn M.L."/>
            <person name="Haft D.H."/>
            <person name="Hickey E.K."/>
            <person name="Kolonay J.F."/>
            <person name="Nelson W.C."/>
            <person name="Umayam L.A."/>
            <person name="Ermolaeva M.D."/>
            <person name="Salzberg S.L."/>
            <person name="Delcher A."/>
            <person name="Utterback T.R."/>
            <person name="Weidman J.F."/>
            <person name="Khouri H.M."/>
            <person name="Gill J."/>
            <person name="Mikula A."/>
            <person name="Bishai W."/>
            <person name="Jacobs W.R. Jr."/>
            <person name="Venter J.C."/>
            <person name="Fraser C.M."/>
        </authorList>
    </citation>
    <scope>NUCLEOTIDE SEQUENCE [LARGE SCALE GENOMIC DNA]</scope>
    <source>
        <strain>CDC 1551 / Oshkosh</strain>
    </source>
</reference>
<accession>P9WQ28</accession>
<accession>L0T6I3</accession>
<accession>Q10633</accession>
<name>Y1320_MYCTO</name>
<organism>
    <name type="scientific">Mycobacterium tuberculosis (strain CDC 1551 / Oshkosh)</name>
    <dbReference type="NCBI Taxonomy" id="83331"/>
    <lineage>
        <taxon>Bacteria</taxon>
        <taxon>Bacillati</taxon>
        <taxon>Actinomycetota</taxon>
        <taxon>Actinomycetes</taxon>
        <taxon>Mycobacteriales</taxon>
        <taxon>Mycobacteriaceae</taxon>
        <taxon>Mycobacterium</taxon>
        <taxon>Mycobacterium tuberculosis complex</taxon>
    </lineage>
</organism>
<dbReference type="EMBL" id="AE000516">
    <property type="protein sequence ID" value="AAK45624.1"/>
    <property type="molecule type" value="Genomic_DNA"/>
</dbReference>
<dbReference type="PIR" id="D70769">
    <property type="entry name" value="D70769"/>
</dbReference>
<dbReference type="RefSeq" id="WP_003898821.1">
    <property type="nucleotide sequence ID" value="NZ_KK341227.1"/>
</dbReference>
<dbReference type="SMR" id="P9WQ28"/>
<dbReference type="KEGG" id="mtc:MT1362"/>
<dbReference type="PATRIC" id="fig|83331.31.peg.1468"/>
<dbReference type="HOGENOM" id="CLU_025433_2_1_11"/>
<dbReference type="Proteomes" id="UP000001020">
    <property type="component" value="Chromosome"/>
</dbReference>
<dbReference type="GO" id="GO:0005886">
    <property type="term" value="C:plasma membrane"/>
    <property type="evidence" value="ECO:0007669"/>
    <property type="project" value="UniProtKB-SubCell"/>
</dbReference>
<dbReference type="GO" id="GO:0004016">
    <property type="term" value="F:adenylate cyclase activity"/>
    <property type="evidence" value="ECO:0007669"/>
    <property type="project" value="UniProtKB-ARBA"/>
</dbReference>
<dbReference type="GO" id="GO:0006171">
    <property type="term" value="P:cAMP biosynthetic process"/>
    <property type="evidence" value="ECO:0007669"/>
    <property type="project" value="TreeGrafter"/>
</dbReference>
<dbReference type="GO" id="GO:0035556">
    <property type="term" value="P:intracellular signal transduction"/>
    <property type="evidence" value="ECO:0007669"/>
    <property type="project" value="InterPro"/>
</dbReference>
<dbReference type="CDD" id="cd07302">
    <property type="entry name" value="CHD"/>
    <property type="match status" value="1"/>
</dbReference>
<dbReference type="CDD" id="cd06225">
    <property type="entry name" value="HAMP"/>
    <property type="match status" value="1"/>
</dbReference>
<dbReference type="FunFam" id="3.30.70.1230:FF:000016">
    <property type="entry name" value="Adenylate/guanylate cyclase domain-containing protein"/>
    <property type="match status" value="1"/>
</dbReference>
<dbReference type="Gene3D" id="6.10.340.10">
    <property type="match status" value="1"/>
</dbReference>
<dbReference type="Gene3D" id="3.30.70.1230">
    <property type="entry name" value="Nucleotide cyclase"/>
    <property type="match status" value="1"/>
</dbReference>
<dbReference type="InterPro" id="IPR001054">
    <property type="entry name" value="A/G_cyclase"/>
</dbReference>
<dbReference type="InterPro" id="IPR050697">
    <property type="entry name" value="Adenylyl/Guanylyl_Cyclase_3/4"/>
</dbReference>
<dbReference type="InterPro" id="IPR003660">
    <property type="entry name" value="HAMP_dom"/>
</dbReference>
<dbReference type="InterPro" id="IPR029787">
    <property type="entry name" value="Nucleotide_cyclase"/>
</dbReference>
<dbReference type="PANTHER" id="PTHR43081">
    <property type="entry name" value="ADENYLATE CYCLASE, TERMINAL-DIFFERENTIATION SPECIFIC-RELATED"/>
    <property type="match status" value="1"/>
</dbReference>
<dbReference type="PANTHER" id="PTHR43081:SF17">
    <property type="entry name" value="BLL5647 PROTEIN"/>
    <property type="match status" value="1"/>
</dbReference>
<dbReference type="Pfam" id="PF00211">
    <property type="entry name" value="Guanylate_cyc"/>
    <property type="match status" value="1"/>
</dbReference>
<dbReference type="Pfam" id="PF00672">
    <property type="entry name" value="HAMP"/>
    <property type="match status" value="1"/>
</dbReference>
<dbReference type="SMART" id="SM00044">
    <property type="entry name" value="CYCc"/>
    <property type="match status" value="1"/>
</dbReference>
<dbReference type="SMART" id="SM00304">
    <property type="entry name" value="HAMP"/>
    <property type="match status" value="1"/>
</dbReference>
<dbReference type="SUPFAM" id="SSF158472">
    <property type="entry name" value="HAMP domain-like"/>
    <property type="match status" value="1"/>
</dbReference>
<dbReference type="SUPFAM" id="SSF55073">
    <property type="entry name" value="Nucleotide cyclase"/>
    <property type="match status" value="1"/>
</dbReference>
<dbReference type="PROSITE" id="PS50125">
    <property type="entry name" value="GUANYLATE_CYCLASE_2"/>
    <property type="match status" value="1"/>
</dbReference>
<dbReference type="PROSITE" id="PS50885">
    <property type="entry name" value="HAMP"/>
    <property type="match status" value="1"/>
</dbReference>
<evidence type="ECO:0000255" key="1"/>
<evidence type="ECO:0000255" key="2">
    <source>
        <dbReference type="PROSITE-ProRule" id="PRU00099"/>
    </source>
</evidence>
<evidence type="ECO:0000255" key="3">
    <source>
        <dbReference type="PROSITE-ProRule" id="PRU00102"/>
    </source>
</evidence>
<evidence type="ECO:0000256" key="4">
    <source>
        <dbReference type="SAM" id="MobiDB-lite"/>
    </source>
</evidence>
<evidence type="ECO:0000305" key="5"/>
<proteinExistence type="inferred from homology"/>